<evidence type="ECO:0000255" key="1">
    <source>
        <dbReference type="PROSITE-ProRule" id="PRU00498"/>
    </source>
</evidence>
<evidence type="ECO:0000255" key="2">
    <source>
        <dbReference type="PROSITE-ProRule" id="PRU10037"/>
    </source>
</evidence>
<evidence type="ECO:0000269" key="3">
    <source>
    </source>
</evidence>
<evidence type="ECO:0000269" key="4">
    <source>
    </source>
</evidence>
<evidence type="ECO:0000303" key="5">
    <source>
    </source>
</evidence>
<evidence type="ECO:0000305" key="6"/>
<evidence type="ECO:0000312" key="7">
    <source>
        <dbReference type="Araport" id="AT2G15230"/>
    </source>
</evidence>
<evidence type="ECO:0000312" key="8">
    <source>
        <dbReference type="EMBL" id="AAD25569.1"/>
    </source>
</evidence>
<proteinExistence type="evidence at protein level"/>
<accession>Q71DJ5</accession>
<accession>Q1H5B7</accession>
<accession>Q9SKL5</accession>
<comment type="function">
    <text evidence="3 4">Triacylglycerol (TAG) lipase active on triolein, trioctanoin, tributyrin and 1,3-Diolein, but not on phospho- and galactolipids (PubMed:16226259). Involved but dispensable for TAG storage breakdown during seed germination (PubMed:16226259, PubMed:24989044).</text>
</comment>
<comment type="catalytic activity">
    <reaction evidence="3">
        <text>a triacylglycerol + H2O = a diacylglycerol + a fatty acid + H(+)</text>
        <dbReference type="Rhea" id="RHEA:12044"/>
        <dbReference type="ChEBI" id="CHEBI:15377"/>
        <dbReference type="ChEBI" id="CHEBI:15378"/>
        <dbReference type="ChEBI" id="CHEBI:17855"/>
        <dbReference type="ChEBI" id="CHEBI:18035"/>
        <dbReference type="ChEBI" id="CHEBI:28868"/>
        <dbReference type="EC" id="3.1.1.3"/>
    </reaction>
    <physiologicalReaction direction="left-to-right" evidence="3">
        <dbReference type="Rhea" id="RHEA:12045"/>
    </physiologicalReaction>
</comment>
<comment type="catalytic activity">
    <reaction evidence="3">
        <text>1,2,3-tributanoylglycerol + H2O = dibutanoylglycerol + butanoate + H(+)</text>
        <dbReference type="Rhea" id="RHEA:40475"/>
        <dbReference type="ChEBI" id="CHEBI:15377"/>
        <dbReference type="ChEBI" id="CHEBI:15378"/>
        <dbReference type="ChEBI" id="CHEBI:17968"/>
        <dbReference type="ChEBI" id="CHEBI:35020"/>
        <dbReference type="ChEBI" id="CHEBI:76478"/>
    </reaction>
    <physiologicalReaction direction="left-to-right" evidence="3">
        <dbReference type="Rhea" id="RHEA:40476"/>
    </physiologicalReaction>
</comment>
<comment type="catalytic activity">
    <reaction evidence="3">
        <text>1,2,3-trioctanoylglycerol + H2O = dioctanoylglycerol + octanoate + H(+)</text>
        <dbReference type="Rhea" id="RHEA:47864"/>
        <dbReference type="ChEBI" id="CHEBI:15377"/>
        <dbReference type="ChEBI" id="CHEBI:15378"/>
        <dbReference type="ChEBI" id="CHEBI:25646"/>
        <dbReference type="ChEBI" id="CHEBI:76978"/>
        <dbReference type="ChEBI" id="CHEBI:88066"/>
    </reaction>
    <physiologicalReaction direction="left-to-right" evidence="3">
        <dbReference type="Rhea" id="RHEA:47865"/>
    </physiologicalReaction>
</comment>
<comment type="biophysicochemical properties">
    <kinetics>
        <Vmax evidence="3">45.0 umol/min/mg enzyme with triolein as a substrate</Vmax>
    </kinetics>
    <phDependence>
        <text evidence="3">Optimum pH is 6. Active between pH 4-7.</text>
    </phDependence>
</comment>
<comment type="pathway">
    <text evidence="3">Lipid metabolism; glycerolipid metabolism.</text>
</comment>
<comment type="subcellular location">
    <subcellularLocation>
        <location evidence="6">Secreted</location>
    </subcellularLocation>
</comment>
<comment type="tissue specificity">
    <text evidence="3 4">Expressed in seedlings, roots, leaves, flowers and siliques (PubMed:16226259). Specifically expressed in the epidermis (PubMed:24989044).</text>
</comment>
<comment type="developmental stage">
    <text evidence="4">Accumulates in seeds upon imbibition.</text>
</comment>
<comment type="induction">
    <text evidence="4">Stimulated during seed imbibition (PubMed:24989044). Induced by gibberellins (GAs) and repressed by DELLA proteins (e.g. GAI/RGA2, RGA/RGA1/GRS and RGL2/SCL19) in an ATML1- and PDF2-dependent manner (PubMed:24989044). Upon seed imbibition, increased GA levels in the epidermis reduce DELLA proteins abundance and release, in turn, ATML1 and PDF2 which activate LIP1 expression, thus enhancing germination potential (PubMed:24989044).</text>
</comment>
<comment type="similarity">
    <text evidence="6">Belongs to the AB hydrolase superfamily. Lipase family.</text>
</comment>
<comment type="sequence caution" evidence="6">
    <conflict type="erroneous gene model prediction">
        <sequence resource="EMBL-CDS" id="AAD25569"/>
    </conflict>
</comment>
<organism>
    <name type="scientific">Arabidopsis thaliana</name>
    <name type="common">Mouse-ear cress</name>
    <dbReference type="NCBI Taxonomy" id="3702"/>
    <lineage>
        <taxon>Eukaryota</taxon>
        <taxon>Viridiplantae</taxon>
        <taxon>Streptophyta</taxon>
        <taxon>Embryophyta</taxon>
        <taxon>Tracheophyta</taxon>
        <taxon>Spermatophyta</taxon>
        <taxon>Magnoliopsida</taxon>
        <taxon>eudicotyledons</taxon>
        <taxon>Gunneridae</taxon>
        <taxon>Pentapetalae</taxon>
        <taxon>rosids</taxon>
        <taxon>malvids</taxon>
        <taxon>Brassicales</taxon>
        <taxon>Brassicaceae</taxon>
        <taxon>Camelineae</taxon>
        <taxon>Arabidopsis</taxon>
    </lineage>
</organism>
<protein>
    <recommendedName>
        <fullName evidence="5">Triacylglycerol lipase 1</fullName>
        <ecNumber evidence="3">3.1.1.3</ecNumber>
    </recommendedName>
</protein>
<gene>
    <name evidence="5" type="primary">LIP1</name>
    <name evidence="7" type="ordered locus">At2g15230</name>
    <name evidence="8" type="ORF">F15A23.3</name>
</gene>
<sequence>MKWLLVAVLTSLTIFSALTQSHLLHGSPVNSLCADLIHPANYSCTEHSIQTKDGYILALQRVASLGPRLQSGPPVLLQHGLFMAGDVWFLNSPKESLGFILADHGFDVWVGNVRGTRYSYGHVTLSDTDKEFWDWSWQDLAMYDLAEMIQYLYSISNSKIFLVGHSQGTIMSFAALTQPHVAEMVEAAALLCPISYLDHVTAPLVERMVFMHLDQMVVALGLHQINFRSDMLVKLVDSLCEGHMDCTDFLTSITGTNCCFNASKIEYYLDYEPHPSSVKNIRHLFQMIRKGTFAQYDYGYFKNLRTYGLSKPPEFILSHIPASLPMWMGYGGTDGLADVTDVEHTLAELPSSPELLYLEDYGHIDFVLGSSAKEDVYKHMIQFFRAKVKSSSW</sequence>
<name>LIP1_ARATH</name>
<feature type="signal peptide" evidence="3">
    <location>
        <begin position="1"/>
        <end position="20"/>
    </location>
</feature>
<feature type="chain" id="PRO_0000234336" description="Triacylglycerol lipase 1">
    <location>
        <begin position="21"/>
        <end position="393"/>
    </location>
</feature>
<feature type="active site" description="Nucleophile" evidence="2">
    <location>
        <position position="166"/>
    </location>
</feature>
<feature type="active site" description="Charge relay system" evidence="2">
    <location>
        <position position="334"/>
    </location>
</feature>
<feature type="active site" description="Charge relay system" evidence="2">
    <location>
        <position position="363"/>
    </location>
</feature>
<feature type="glycosylation site" description="N-linked (GlcNAc...) asparagine" evidence="1">
    <location>
        <position position="41"/>
    </location>
</feature>
<feature type="glycosylation site" description="N-linked (GlcNAc...) asparagine" evidence="1">
    <location>
        <position position="261"/>
    </location>
</feature>
<keyword id="KW-0903">Direct protein sequencing</keyword>
<keyword id="KW-0939">Gibberellin signaling pathway</keyword>
<keyword id="KW-0325">Glycoprotein</keyword>
<keyword id="KW-0378">Hydrolase</keyword>
<keyword id="KW-0442">Lipid degradation</keyword>
<keyword id="KW-0443">Lipid metabolism</keyword>
<keyword id="KW-1185">Reference proteome</keyword>
<keyword id="KW-0964">Secreted</keyword>
<keyword id="KW-0732">Signal</keyword>
<reference key="1">
    <citation type="journal article" date="2005" name="FEBS Lett.">
        <title>Identification and characterization of a triacylglycerol lipase in Arabidopsis homologous to mammalian acid lipases.</title>
        <authorList>
            <person name="El-Kouhen K."/>
            <person name="Blangy S."/>
            <person name="Ortiz E."/>
            <person name="Gardies A.-M."/>
            <person name="Ferte N."/>
            <person name="Arondel V."/>
        </authorList>
    </citation>
    <scope>NUCLEOTIDE SEQUENCE [MRNA]</scope>
    <scope>PROTEIN SEQUENCE OF 21-28</scope>
    <scope>FUNCTION</scope>
    <scope>TISSUE SPECIFICITY</scope>
    <scope>BIOPHYSICOCHEMICAL PROPERTIES</scope>
    <scope>CATALYTIC ACTIVITY</scope>
    <scope>PATHWAY</scope>
</reference>
<reference key="2">
    <citation type="submission" date="2002-07" db="EMBL/GenBank/DDBJ databases">
        <title>Triacylglycerol (steryl ester) hydrolase from Arabidopsis thaliana is involved in lipid homeostasy.</title>
        <authorList>
            <person name="Benveniste P."/>
            <person name="Noiriel A."/>
            <person name="Nave P."/>
            <person name="Schaller H."/>
        </authorList>
    </citation>
    <scope>NUCLEOTIDE SEQUENCE [MRNA]</scope>
    <source>
        <strain>cv. Columbia</strain>
    </source>
</reference>
<reference key="3">
    <citation type="journal article" date="1999" name="Nature">
        <title>Sequence and analysis of chromosome 2 of the plant Arabidopsis thaliana.</title>
        <authorList>
            <person name="Lin X."/>
            <person name="Kaul S."/>
            <person name="Rounsley S.D."/>
            <person name="Shea T.P."/>
            <person name="Benito M.-I."/>
            <person name="Town C.D."/>
            <person name="Fujii C.Y."/>
            <person name="Mason T.M."/>
            <person name="Bowman C.L."/>
            <person name="Barnstead M.E."/>
            <person name="Feldblyum T.V."/>
            <person name="Buell C.R."/>
            <person name="Ketchum K.A."/>
            <person name="Lee J.J."/>
            <person name="Ronning C.M."/>
            <person name="Koo H.L."/>
            <person name="Moffat K.S."/>
            <person name="Cronin L.A."/>
            <person name="Shen M."/>
            <person name="Pai G."/>
            <person name="Van Aken S."/>
            <person name="Umayam L."/>
            <person name="Tallon L.J."/>
            <person name="Gill J.E."/>
            <person name="Adams M.D."/>
            <person name="Carrera A.J."/>
            <person name="Creasy T.H."/>
            <person name="Goodman H.M."/>
            <person name="Somerville C.R."/>
            <person name="Copenhaver G.P."/>
            <person name="Preuss D."/>
            <person name="Nierman W.C."/>
            <person name="White O."/>
            <person name="Eisen J.A."/>
            <person name="Salzberg S.L."/>
            <person name="Fraser C.M."/>
            <person name="Venter J.C."/>
        </authorList>
    </citation>
    <scope>NUCLEOTIDE SEQUENCE [LARGE SCALE GENOMIC DNA]</scope>
    <source>
        <strain>cv. Columbia</strain>
    </source>
</reference>
<reference key="4">
    <citation type="journal article" date="2017" name="Plant J.">
        <title>Araport11: a complete reannotation of the Arabidopsis thaliana reference genome.</title>
        <authorList>
            <person name="Cheng C.Y."/>
            <person name="Krishnakumar V."/>
            <person name="Chan A.P."/>
            <person name="Thibaud-Nissen F."/>
            <person name="Schobel S."/>
            <person name="Town C.D."/>
        </authorList>
    </citation>
    <scope>GENOME REANNOTATION</scope>
    <source>
        <strain>cv. Columbia</strain>
    </source>
</reference>
<reference key="5">
    <citation type="submission" date="2006-05" db="EMBL/GenBank/DDBJ databases">
        <title>Arabidopsis ORF clones.</title>
        <authorList>
            <person name="Shinn P."/>
            <person name="Chen H."/>
            <person name="Kim C.J."/>
            <person name="Quinitio C."/>
            <person name="Ecker J.R."/>
        </authorList>
    </citation>
    <scope>NUCLEOTIDE SEQUENCE [LARGE SCALE MRNA]</scope>
    <source>
        <strain>cv. Columbia</strain>
    </source>
</reference>
<reference key="6">
    <citation type="submission" date="2006-07" db="EMBL/GenBank/DDBJ databases">
        <title>Large-scale analysis of RIKEN Arabidopsis full-length (RAFL) cDNAs.</title>
        <authorList>
            <person name="Totoki Y."/>
            <person name="Seki M."/>
            <person name="Ishida J."/>
            <person name="Nakajima M."/>
            <person name="Enju A."/>
            <person name="Kamiya A."/>
            <person name="Narusaka M."/>
            <person name="Shin-i T."/>
            <person name="Nakagawa M."/>
            <person name="Sakamoto N."/>
            <person name="Oishi K."/>
            <person name="Kohara Y."/>
            <person name="Kobayashi M."/>
            <person name="Toyoda A."/>
            <person name="Sakaki Y."/>
            <person name="Sakurai T."/>
            <person name="Iida K."/>
            <person name="Akiyama K."/>
            <person name="Satou M."/>
            <person name="Toyoda T."/>
            <person name="Konagaya A."/>
            <person name="Carninci P."/>
            <person name="Kawai J."/>
            <person name="Hayashizaki Y."/>
            <person name="Shinozaki K."/>
        </authorList>
    </citation>
    <scope>NUCLEOTIDE SEQUENCE [LARGE SCALE MRNA]</scope>
    <source>
        <strain>cv. Columbia</strain>
    </source>
</reference>
<reference key="7">
    <citation type="journal article" date="2013" name="Arabidopsis Book">
        <title>Acyl-lipid metabolism.</title>
        <authorList>
            <person name="Li-Beisson Y."/>
            <person name="Shorrosh B."/>
            <person name="Beisson F."/>
            <person name="Andersson M.X."/>
            <person name="Arondel V."/>
            <person name="Bates P.D."/>
            <person name="Baud S."/>
            <person name="Bird D."/>
            <person name="Debono A."/>
            <person name="Durrett T.P."/>
            <person name="Franke R.B."/>
            <person name="Graham I.A."/>
            <person name="Katayama K."/>
            <person name="Kelly A.A."/>
            <person name="Larson T."/>
            <person name="Markham J.E."/>
            <person name="Miquel M."/>
            <person name="Molina I."/>
            <person name="Nishida I."/>
            <person name="Rowland O."/>
            <person name="Samuels L."/>
            <person name="Schmid K.M."/>
            <person name="Wada H."/>
            <person name="Welti R."/>
            <person name="Xu C."/>
            <person name="Zallot R."/>
            <person name="Ohlrogge J."/>
        </authorList>
    </citation>
    <scope>REVIEW ON ACYL-LIPID METABOLISM</scope>
</reference>
<reference key="8">
    <citation type="journal article" date="2014" name="Plant Cell">
        <title>Arabidopsis DELLA and two HD-ZIP transcription factors regulate GA signaling in the epidermis through the L1 box cis-element.</title>
        <authorList>
            <person name="Rombola-Caldentey B."/>
            <person name="Rueda-Romero P."/>
            <person name="Iglesias-Fernandez R."/>
            <person name="Carbonero P."/>
            <person name="Onate-Sanchez L."/>
        </authorList>
    </citation>
    <scope>FUNCTION</scope>
    <scope>INDUCTION BY IMBIBITION; GIBBERELLINS AND DELLA PROTEINS</scope>
    <scope>TISSUE SPECIFICITY</scope>
    <scope>DEVELOPMENTAL STAGE</scope>
    <source>
        <strain>cv. Columbia</strain>
        <strain>cv. Landsberg erecta</strain>
    </source>
</reference>
<dbReference type="EC" id="3.1.1.3" evidence="3"/>
<dbReference type="EMBL" id="AF530477">
    <property type="protein sequence ID" value="AAN77143.1"/>
    <property type="molecule type" value="mRNA"/>
</dbReference>
<dbReference type="EMBL" id="AC006298">
    <property type="protein sequence ID" value="AAD25569.1"/>
    <property type="status" value="ALT_SEQ"/>
    <property type="molecule type" value="Genomic_DNA"/>
</dbReference>
<dbReference type="EMBL" id="CP002685">
    <property type="protein sequence ID" value="AEC06377.1"/>
    <property type="molecule type" value="Genomic_DNA"/>
</dbReference>
<dbReference type="EMBL" id="BT025547">
    <property type="protein sequence ID" value="ABF58965.1"/>
    <property type="molecule type" value="mRNA"/>
</dbReference>
<dbReference type="EMBL" id="AK229578">
    <property type="protein sequence ID" value="BAF01428.1"/>
    <property type="molecule type" value="mRNA"/>
</dbReference>
<dbReference type="PIR" id="E84526">
    <property type="entry name" value="E84526"/>
</dbReference>
<dbReference type="RefSeq" id="NP_179126.2">
    <property type="nucleotide sequence ID" value="NM_127084.3"/>
</dbReference>
<dbReference type="SMR" id="Q71DJ5"/>
<dbReference type="FunCoup" id="Q71DJ5">
    <property type="interactions" value="979"/>
</dbReference>
<dbReference type="STRING" id="3702.Q71DJ5"/>
<dbReference type="SwissLipids" id="SLP:000001907"/>
<dbReference type="ESTHER" id="arath-At2g15230">
    <property type="family name" value="Acidic_Lipase"/>
</dbReference>
<dbReference type="MEROPS" id="S33.A61"/>
<dbReference type="GlyCosmos" id="Q71DJ5">
    <property type="glycosylation" value="2 sites, No reported glycans"/>
</dbReference>
<dbReference type="GlyGen" id="Q71DJ5">
    <property type="glycosylation" value="2 sites"/>
</dbReference>
<dbReference type="PaxDb" id="3702-AT2G15230.1"/>
<dbReference type="ProteomicsDB" id="238607"/>
<dbReference type="EnsemblPlants" id="AT2G15230.1">
    <property type="protein sequence ID" value="AT2G15230.1"/>
    <property type="gene ID" value="AT2G15230"/>
</dbReference>
<dbReference type="GeneID" id="816012"/>
<dbReference type="Gramene" id="AT2G15230.1">
    <property type="protein sequence ID" value="AT2G15230.1"/>
    <property type="gene ID" value="AT2G15230"/>
</dbReference>
<dbReference type="KEGG" id="ath:AT2G15230"/>
<dbReference type="Araport" id="AT2G15230"/>
<dbReference type="TAIR" id="AT2G15230">
    <property type="gene designation" value="LIP1"/>
</dbReference>
<dbReference type="eggNOG" id="KOG2624">
    <property type="taxonomic scope" value="Eukaryota"/>
</dbReference>
<dbReference type="HOGENOM" id="CLU_010974_1_1_1"/>
<dbReference type="InParanoid" id="Q71DJ5"/>
<dbReference type="OMA" id="WRMYNEI"/>
<dbReference type="PhylomeDB" id="Q71DJ5"/>
<dbReference type="BioCyc" id="ARA:AT2G15230-MONOMER"/>
<dbReference type="BRENDA" id="3.1.1.3">
    <property type="organism ID" value="399"/>
</dbReference>
<dbReference type="UniPathway" id="UPA00230"/>
<dbReference type="PRO" id="PR:Q71DJ5"/>
<dbReference type="Proteomes" id="UP000006548">
    <property type="component" value="Chromosome 2"/>
</dbReference>
<dbReference type="ExpressionAtlas" id="Q71DJ5">
    <property type="expression patterns" value="baseline and differential"/>
</dbReference>
<dbReference type="GO" id="GO:0005615">
    <property type="term" value="C:extracellular space"/>
    <property type="evidence" value="ECO:0000304"/>
    <property type="project" value="TAIR"/>
</dbReference>
<dbReference type="GO" id="GO:0004806">
    <property type="term" value="F:triacylglycerol lipase activity"/>
    <property type="evidence" value="ECO:0000314"/>
    <property type="project" value="TAIR"/>
</dbReference>
<dbReference type="GO" id="GO:0009740">
    <property type="term" value="P:gibberellic acid mediated signaling pathway"/>
    <property type="evidence" value="ECO:0007669"/>
    <property type="project" value="UniProtKB-KW"/>
</dbReference>
<dbReference type="GO" id="GO:0046486">
    <property type="term" value="P:glycerolipid metabolic process"/>
    <property type="evidence" value="ECO:0007669"/>
    <property type="project" value="UniProtKB-UniPathway"/>
</dbReference>
<dbReference type="GO" id="GO:0016042">
    <property type="term" value="P:lipid catabolic process"/>
    <property type="evidence" value="ECO:0007669"/>
    <property type="project" value="UniProtKB-KW"/>
</dbReference>
<dbReference type="GO" id="GO:2000033">
    <property type="term" value="P:regulation of seed dormancy process"/>
    <property type="evidence" value="ECO:0000270"/>
    <property type="project" value="UniProtKB"/>
</dbReference>
<dbReference type="GO" id="GO:0010029">
    <property type="term" value="P:regulation of seed germination"/>
    <property type="evidence" value="ECO:0000270"/>
    <property type="project" value="UniProtKB"/>
</dbReference>
<dbReference type="GO" id="GO:0009739">
    <property type="term" value="P:response to gibberellin"/>
    <property type="evidence" value="ECO:0000270"/>
    <property type="project" value="UniProtKB"/>
</dbReference>
<dbReference type="FunFam" id="3.40.50.1820:FF:000057">
    <property type="entry name" value="Lipase"/>
    <property type="match status" value="1"/>
</dbReference>
<dbReference type="Gene3D" id="3.40.50.1820">
    <property type="entry name" value="alpha/beta hydrolase"/>
    <property type="match status" value="1"/>
</dbReference>
<dbReference type="InterPro" id="IPR029058">
    <property type="entry name" value="AB_hydrolase_fold"/>
</dbReference>
<dbReference type="InterPro" id="IPR006693">
    <property type="entry name" value="AB_hydrolase_lipase"/>
</dbReference>
<dbReference type="InterPro" id="IPR025483">
    <property type="entry name" value="Lipase_euk"/>
</dbReference>
<dbReference type="PANTHER" id="PTHR11005">
    <property type="entry name" value="LYSOSOMAL ACID LIPASE-RELATED"/>
    <property type="match status" value="1"/>
</dbReference>
<dbReference type="Pfam" id="PF04083">
    <property type="entry name" value="Abhydro_lipase"/>
    <property type="match status" value="1"/>
</dbReference>
<dbReference type="PIRSF" id="PIRSF000862">
    <property type="entry name" value="Steryl_ester_lip"/>
    <property type="match status" value="1"/>
</dbReference>
<dbReference type="SUPFAM" id="SSF53474">
    <property type="entry name" value="alpha/beta-Hydrolases"/>
    <property type="match status" value="1"/>
</dbReference>
<dbReference type="PROSITE" id="PS00120">
    <property type="entry name" value="LIPASE_SER"/>
    <property type="match status" value="1"/>
</dbReference>